<sequence>MSTAKLVKTKASNLLYTRNDVSESDKKATVELLNRQVIQFIDLSLITKQAHWNMRGANFIAVHEMLDGFRTALTDHLDTMAERAVQLGGVALGTTQVINSKTPLKSYPLDIHNVQDHLKELADRYAVVANDVRKAIGEAKDEDTADIFTAASRDLDKFLWFIESNIE</sequence>
<keyword id="KW-0963">Cytoplasm</keyword>
<keyword id="KW-0226">DNA condensation</keyword>
<keyword id="KW-0238">DNA-binding</keyword>
<keyword id="KW-0408">Iron</keyword>
<keyword id="KW-0409">Iron storage</keyword>
<keyword id="KW-0479">Metal-binding</keyword>
<keyword id="KW-0560">Oxidoreductase</keyword>
<evidence type="ECO:0000255" key="1">
    <source>
        <dbReference type="HAMAP-Rule" id="MF_01441"/>
    </source>
</evidence>
<feature type="chain" id="PRO_1000145915" description="DNA protection during starvation protein">
    <location>
        <begin position="1"/>
        <end position="167"/>
    </location>
</feature>
<feature type="binding site" evidence="1">
    <location>
        <position position="51"/>
    </location>
    <ligand>
        <name>Fe cation</name>
        <dbReference type="ChEBI" id="CHEBI:24875"/>
    </ligand>
</feature>
<feature type="binding site" evidence="1">
    <location>
        <position position="78"/>
    </location>
    <ligand>
        <name>Fe cation</name>
        <dbReference type="ChEBI" id="CHEBI:24875"/>
    </ligand>
</feature>
<feature type="binding site" evidence="1">
    <location>
        <position position="82"/>
    </location>
    <ligand>
        <name>Fe cation</name>
        <dbReference type="ChEBI" id="CHEBI:24875"/>
    </ligand>
</feature>
<organism>
    <name type="scientific">Salmonella paratyphi A (strain AKU_12601)</name>
    <dbReference type="NCBI Taxonomy" id="554290"/>
    <lineage>
        <taxon>Bacteria</taxon>
        <taxon>Pseudomonadati</taxon>
        <taxon>Pseudomonadota</taxon>
        <taxon>Gammaproteobacteria</taxon>
        <taxon>Enterobacterales</taxon>
        <taxon>Enterobacteriaceae</taxon>
        <taxon>Salmonella</taxon>
    </lineage>
</organism>
<reference key="1">
    <citation type="journal article" date="2009" name="BMC Genomics">
        <title>Pseudogene accumulation in the evolutionary histories of Salmonella enterica serovars Paratyphi A and Typhi.</title>
        <authorList>
            <person name="Holt K.E."/>
            <person name="Thomson N.R."/>
            <person name="Wain J."/>
            <person name="Langridge G.C."/>
            <person name="Hasan R."/>
            <person name="Bhutta Z.A."/>
            <person name="Quail M.A."/>
            <person name="Norbertczak H."/>
            <person name="Walker D."/>
            <person name="Simmonds M."/>
            <person name="White B."/>
            <person name="Bason N."/>
            <person name="Mungall K."/>
            <person name="Dougan G."/>
            <person name="Parkhill J."/>
        </authorList>
    </citation>
    <scope>NUCLEOTIDE SEQUENCE [LARGE SCALE GENOMIC DNA]</scope>
    <source>
        <strain>AKU_12601</strain>
    </source>
</reference>
<comment type="function">
    <text evidence="1">During stationary phase, binds the chromosome non-specifically, forming a highly ordered and stable dps-DNA co-crystal within which chromosomal DNA is condensed and protected from diverse damages. It protects DNA from oxidative damage by sequestering intracellular Fe(2+) ion and storing it in the form of Fe(3+) oxyhydroxide mineral, which can be released after reduction. One hydrogen peroxide oxidizes two Fe(2+) ions, which prevents hydroxyl radical production by the Fenton reaction.</text>
</comment>
<comment type="catalytic activity">
    <reaction evidence="1">
        <text>2 Fe(2+) + H2O2 + 2 H(+) = 2 Fe(3+) + 2 H2O</text>
        <dbReference type="Rhea" id="RHEA:48712"/>
        <dbReference type="ChEBI" id="CHEBI:15377"/>
        <dbReference type="ChEBI" id="CHEBI:15378"/>
        <dbReference type="ChEBI" id="CHEBI:16240"/>
        <dbReference type="ChEBI" id="CHEBI:29033"/>
        <dbReference type="ChEBI" id="CHEBI:29034"/>
    </reaction>
</comment>
<comment type="subunit">
    <text evidence="1">Homododecamer. The 12 subunits form a hollow sphere into which the mineral iron core of up to 500 Fe(3+) can be deposited.</text>
</comment>
<comment type="subcellular location">
    <subcellularLocation>
        <location evidence="1">Cytoplasm</location>
    </subcellularLocation>
</comment>
<comment type="similarity">
    <text evidence="1">Belongs to the Dps family.</text>
</comment>
<accession>B5BBZ6</accession>
<gene>
    <name evidence="1" type="primary">dps</name>
    <name type="ordered locus">SSPA1791</name>
</gene>
<proteinExistence type="inferred from homology"/>
<name>DPS_SALPK</name>
<dbReference type="EC" id="1.16.-.-" evidence="1"/>
<dbReference type="EMBL" id="FM200053">
    <property type="protein sequence ID" value="CAR59986.1"/>
    <property type="molecule type" value="Genomic_DNA"/>
</dbReference>
<dbReference type="RefSeq" id="WP_000100805.1">
    <property type="nucleotide sequence ID" value="NC_011147.1"/>
</dbReference>
<dbReference type="SMR" id="B5BBZ6"/>
<dbReference type="KEGG" id="sek:SSPA1791"/>
<dbReference type="HOGENOM" id="CLU_098183_1_2_6"/>
<dbReference type="Proteomes" id="UP000001869">
    <property type="component" value="Chromosome"/>
</dbReference>
<dbReference type="GO" id="GO:0005737">
    <property type="term" value="C:cytoplasm"/>
    <property type="evidence" value="ECO:0007669"/>
    <property type="project" value="UniProtKB-SubCell"/>
</dbReference>
<dbReference type="GO" id="GO:0003677">
    <property type="term" value="F:DNA binding"/>
    <property type="evidence" value="ECO:0007669"/>
    <property type="project" value="UniProtKB-UniRule"/>
</dbReference>
<dbReference type="GO" id="GO:0008199">
    <property type="term" value="F:ferric iron binding"/>
    <property type="evidence" value="ECO:0007669"/>
    <property type="project" value="UniProtKB-UniRule"/>
</dbReference>
<dbReference type="GO" id="GO:0016722">
    <property type="term" value="F:oxidoreductase activity, acting on metal ions"/>
    <property type="evidence" value="ECO:0007669"/>
    <property type="project" value="InterPro"/>
</dbReference>
<dbReference type="GO" id="GO:0030261">
    <property type="term" value="P:chromosome condensation"/>
    <property type="evidence" value="ECO:0007669"/>
    <property type="project" value="UniProtKB-KW"/>
</dbReference>
<dbReference type="GO" id="GO:0006879">
    <property type="term" value="P:intracellular iron ion homeostasis"/>
    <property type="evidence" value="ECO:0007669"/>
    <property type="project" value="UniProtKB-KW"/>
</dbReference>
<dbReference type="CDD" id="cd01043">
    <property type="entry name" value="DPS"/>
    <property type="match status" value="1"/>
</dbReference>
<dbReference type="FunFam" id="1.20.1260.10:FF:000003">
    <property type="entry name" value="DNA protection during starvation protein"/>
    <property type="match status" value="1"/>
</dbReference>
<dbReference type="Gene3D" id="1.20.1260.10">
    <property type="match status" value="1"/>
</dbReference>
<dbReference type="HAMAP" id="MF_01441">
    <property type="entry name" value="Dps"/>
    <property type="match status" value="1"/>
</dbReference>
<dbReference type="InterPro" id="IPR002177">
    <property type="entry name" value="DPS_DNA-bd"/>
</dbReference>
<dbReference type="InterPro" id="IPR023188">
    <property type="entry name" value="DPS_DNA-bd_CS"/>
</dbReference>
<dbReference type="InterPro" id="IPR023067">
    <property type="entry name" value="Dps_gammaproteobac"/>
</dbReference>
<dbReference type="InterPro" id="IPR012347">
    <property type="entry name" value="Ferritin-like"/>
</dbReference>
<dbReference type="InterPro" id="IPR009078">
    <property type="entry name" value="Ferritin-like_SF"/>
</dbReference>
<dbReference type="InterPro" id="IPR008331">
    <property type="entry name" value="Ferritin_DPS_dom"/>
</dbReference>
<dbReference type="NCBIfam" id="NF006975">
    <property type="entry name" value="PRK09448.1"/>
    <property type="match status" value="1"/>
</dbReference>
<dbReference type="PANTHER" id="PTHR42932:SF3">
    <property type="entry name" value="DNA PROTECTION DURING STARVATION PROTEIN"/>
    <property type="match status" value="1"/>
</dbReference>
<dbReference type="PANTHER" id="PTHR42932">
    <property type="entry name" value="GENERAL STRESS PROTEIN 20U"/>
    <property type="match status" value="1"/>
</dbReference>
<dbReference type="Pfam" id="PF00210">
    <property type="entry name" value="Ferritin"/>
    <property type="match status" value="1"/>
</dbReference>
<dbReference type="PIRSF" id="PIRSF005900">
    <property type="entry name" value="Dps"/>
    <property type="match status" value="1"/>
</dbReference>
<dbReference type="PRINTS" id="PR01346">
    <property type="entry name" value="HELNAPAPROT"/>
</dbReference>
<dbReference type="SUPFAM" id="SSF47240">
    <property type="entry name" value="Ferritin-like"/>
    <property type="match status" value="1"/>
</dbReference>
<dbReference type="PROSITE" id="PS00818">
    <property type="entry name" value="DPS_1"/>
    <property type="match status" value="1"/>
</dbReference>
<dbReference type="PROSITE" id="PS00819">
    <property type="entry name" value="DPS_2"/>
    <property type="match status" value="1"/>
</dbReference>
<protein>
    <recommendedName>
        <fullName evidence="1">DNA protection during starvation protein</fullName>
        <ecNumber evidence="1">1.16.-.-</ecNumber>
    </recommendedName>
</protein>